<keyword id="KW-0007">Acetylation</keyword>
<keyword id="KW-0175">Coiled coil</keyword>
<keyword id="KW-0539">Nucleus</keyword>
<keyword id="KW-0597">Phosphoprotein</keyword>
<keyword id="KW-1185">Reference proteome</keyword>
<accession>Q5R8Y3</accession>
<organism>
    <name type="scientific">Pongo abelii</name>
    <name type="common">Sumatran orangutan</name>
    <name type="synonym">Pongo pygmaeus abelii</name>
    <dbReference type="NCBI Taxonomy" id="9601"/>
    <lineage>
        <taxon>Eukaryota</taxon>
        <taxon>Metazoa</taxon>
        <taxon>Chordata</taxon>
        <taxon>Craniata</taxon>
        <taxon>Vertebrata</taxon>
        <taxon>Euteleostomi</taxon>
        <taxon>Mammalia</taxon>
        <taxon>Eutheria</taxon>
        <taxon>Euarchontoglires</taxon>
        <taxon>Primates</taxon>
        <taxon>Haplorrhini</taxon>
        <taxon>Catarrhini</taxon>
        <taxon>Hominidae</taxon>
        <taxon>Pongo</taxon>
    </lineage>
</organism>
<sequence length="312" mass="35720">MSAFSEAALEKKLSELSNSQQSVQTLSLWLIHHRKHSRPIVTVWERELRKAKPNRKLTFLYLANDVIQNSKRKGPEFTKDFAPVIVEAFKHVSSETDESCKKHLGRVLSIWEERSVYENDVLEQLKQALYGDKKPRKRTYEQIKVDENENCSSLGSPSEPPQTLDLVRALQDLENAASGDAAVHQRIASLPVEVQEVSLLDKITDKESGERLSKMVEDACMLLADYNGRLAAEIDDRKQLTRMLADFLRCQKEALAEKEHKLEEYKRKLARVSLVRKELRSRIQSLPDLSRLPNVTGSHMHLPFAGDIYSED</sequence>
<protein>
    <recommendedName>
        <fullName>Regulation of nuclear pre-mRNA domain-containing protein 1A</fullName>
    </recommendedName>
    <alternativeName>
        <fullName>Cyclin-dependent kinase inhibitor 2B-related protein</fullName>
    </alternativeName>
    <alternativeName>
        <fullName>p15INK4B-related protein</fullName>
    </alternativeName>
</protein>
<gene>
    <name type="primary">RPRD1A</name>
    <name type="synonym">P15RS</name>
</gene>
<dbReference type="EMBL" id="CR859614">
    <property type="protein sequence ID" value="CAH91777.1"/>
    <property type="molecule type" value="mRNA"/>
</dbReference>
<dbReference type="RefSeq" id="NP_001126030.1">
    <property type="nucleotide sequence ID" value="NM_001132558.1"/>
</dbReference>
<dbReference type="RefSeq" id="XP_054393474.1">
    <property type="nucleotide sequence ID" value="XM_054537499.2"/>
</dbReference>
<dbReference type="SMR" id="Q5R8Y3"/>
<dbReference type="FunCoup" id="Q5R8Y3">
    <property type="interactions" value="3160"/>
</dbReference>
<dbReference type="STRING" id="9601.ENSPPYP00000010232"/>
<dbReference type="Ensembl" id="ENSPPYT00000033804.2">
    <property type="protein sequence ID" value="ENSPPYP00000024540.1"/>
    <property type="gene ID" value="ENSPPYG00000009111.3"/>
</dbReference>
<dbReference type="GeneID" id="100172978"/>
<dbReference type="KEGG" id="pon:100172978"/>
<dbReference type="CTD" id="55197"/>
<dbReference type="eggNOG" id="KOG2669">
    <property type="taxonomic scope" value="Eukaryota"/>
</dbReference>
<dbReference type="GeneTree" id="ENSGT00950000183094"/>
<dbReference type="HOGENOM" id="CLU_055523_1_0_1"/>
<dbReference type="InParanoid" id="Q5R8Y3"/>
<dbReference type="OMA" id="LWMQRLK"/>
<dbReference type="OrthoDB" id="10069473at2759"/>
<dbReference type="TreeFam" id="TF320926"/>
<dbReference type="Proteomes" id="UP000001595">
    <property type="component" value="Chromosome 18"/>
</dbReference>
<dbReference type="GO" id="GO:0005634">
    <property type="term" value="C:nucleus"/>
    <property type="evidence" value="ECO:0000250"/>
    <property type="project" value="UniProtKB"/>
</dbReference>
<dbReference type="GO" id="GO:0097550">
    <property type="term" value="C:transcription preinitiation complex"/>
    <property type="evidence" value="ECO:0000250"/>
    <property type="project" value="UniProtKB"/>
</dbReference>
<dbReference type="GO" id="GO:0099122">
    <property type="term" value="F:RNA polymerase II C-terminal domain binding"/>
    <property type="evidence" value="ECO:0007669"/>
    <property type="project" value="InterPro"/>
</dbReference>
<dbReference type="GO" id="GO:0031124">
    <property type="term" value="P:mRNA 3'-end processing"/>
    <property type="evidence" value="ECO:0007669"/>
    <property type="project" value="TreeGrafter"/>
</dbReference>
<dbReference type="GO" id="GO:0001111">
    <property type="term" value="P:RNA polymerase II promoter clearance"/>
    <property type="evidence" value="ECO:0000250"/>
    <property type="project" value="UniProtKB"/>
</dbReference>
<dbReference type="CDD" id="cd17011">
    <property type="entry name" value="CID_RPRD1A"/>
    <property type="match status" value="1"/>
</dbReference>
<dbReference type="FunFam" id="1.25.40.90:FF:000007">
    <property type="entry name" value="Regulation of nuclear pre-mRNA domain-containing protein 1B"/>
    <property type="match status" value="1"/>
</dbReference>
<dbReference type="Gene3D" id="1.25.40.90">
    <property type="match status" value="1"/>
</dbReference>
<dbReference type="Gene3D" id="6.10.250.2560">
    <property type="match status" value="1"/>
</dbReference>
<dbReference type="InterPro" id="IPR006569">
    <property type="entry name" value="CID_dom"/>
</dbReference>
<dbReference type="InterPro" id="IPR008942">
    <property type="entry name" value="ENTH_VHS"/>
</dbReference>
<dbReference type="InterPro" id="IPR032337">
    <property type="entry name" value="RPRD1A/B_C"/>
</dbReference>
<dbReference type="InterPro" id="IPR047884">
    <property type="entry name" value="RPRD1A_CID"/>
</dbReference>
<dbReference type="PANTHER" id="PTHR12460">
    <property type="entry name" value="CYCLIN-DEPENDENT KINASE INHIBITOR-RELATED PROTEIN"/>
    <property type="match status" value="1"/>
</dbReference>
<dbReference type="PANTHER" id="PTHR12460:SF2">
    <property type="entry name" value="REGULATION OF NUCLEAR PRE-MRNA DOMAIN-CONTAINING PROTEIN 1A"/>
    <property type="match status" value="1"/>
</dbReference>
<dbReference type="Pfam" id="PF04818">
    <property type="entry name" value="CID"/>
    <property type="match status" value="1"/>
</dbReference>
<dbReference type="Pfam" id="PF16566">
    <property type="entry name" value="CREPT"/>
    <property type="match status" value="1"/>
</dbReference>
<dbReference type="SMART" id="SM00582">
    <property type="entry name" value="RPR"/>
    <property type="match status" value="1"/>
</dbReference>
<dbReference type="SUPFAM" id="SSF48464">
    <property type="entry name" value="ENTH/VHS domain"/>
    <property type="match status" value="1"/>
</dbReference>
<dbReference type="PROSITE" id="PS51391">
    <property type="entry name" value="CID"/>
    <property type="match status" value="1"/>
</dbReference>
<comment type="function">
    <text evidence="1">Interacts with phosphorylated C-terminal heptapeptide repeat domain (CTD) of the largest RNA polymerase II subunit POLR2A, and participates in dephosphorylation of the CTD by RPAP2. May act as a negative regulator of cyclin-D1 (CCND1) and cyclin-E (CCNE1) in the cell cycle.</text>
</comment>
<comment type="subunit">
    <text evidence="1">May form a heterodimer with RPRD1B. Associates with the RNA polymerase II subunit POLR2A (via CTD phosphorylated at 'Ser-2' and 'Ser-7' of the heptad repeats).</text>
</comment>
<comment type="subcellular location">
    <subcellularLocation>
        <location evidence="1">Nucleus</location>
    </subcellularLocation>
</comment>
<comment type="similarity">
    <text evidence="4">Belongs to the UPF0400 (RTT103) family.</text>
</comment>
<name>RPR1A_PONAB</name>
<reference key="1">
    <citation type="submission" date="2004-11" db="EMBL/GenBank/DDBJ databases">
        <authorList>
            <consortium name="The German cDNA consortium"/>
        </authorList>
    </citation>
    <scope>NUCLEOTIDE SEQUENCE [LARGE SCALE MRNA]</scope>
    <source>
        <tissue>Brain cortex</tissue>
    </source>
</reference>
<proteinExistence type="evidence at transcript level"/>
<evidence type="ECO:0000250" key="1">
    <source>
        <dbReference type="UniProtKB" id="Q96P16"/>
    </source>
</evidence>
<evidence type="ECO:0000255" key="2"/>
<evidence type="ECO:0000255" key="3">
    <source>
        <dbReference type="PROSITE-ProRule" id="PRU00724"/>
    </source>
</evidence>
<evidence type="ECO:0000305" key="4"/>
<feature type="initiator methionine" description="Removed" evidence="1">
    <location>
        <position position="1"/>
    </location>
</feature>
<feature type="chain" id="PRO_0000311346" description="Regulation of nuclear pre-mRNA domain-containing protein 1A">
    <location>
        <begin position="2"/>
        <end position="312"/>
    </location>
</feature>
<feature type="domain" description="CID" evidence="3">
    <location>
        <begin position="2"/>
        <end position="133"/>
    </location>
</feature>
<feature type="coiled-coil region" evidence="2">
    <location>
        <begin position="244"/>
        <end position="286"/>
    </location>
</feature>
<feature type="modified residue" description="N-acetylserine" evidence="1">
    <location>
        <position position="2"/>
    </location>
</feature>
<feature type="modified residue" description="Phosphoserine" evidence="1">
    <location>
        <position position="153"/>
    </location>
</feature>
<feature type="modified residue" description="Phosphoserine" evidence="1">
    <location>
        <position position="156"/>
    </location>
</feature>
<feature type="modified residue" description="Phosphoserine" evidence="1">
    <location>
        <position position="285"/>
    </location>
</feature>